<feature type="chain" id="PRO_0000301936" description="3-hydroxyacyl-[acyl-carrier-protein] dehydratase FabZ">
    <location>
        <begin position="1"/>
        <end position="141"/>
    </location>
</feature>
<feature type="active site" evidence="1">
    <location>
        <position position="48"/>
    </location>
</feature>
<reference key="1">
    <citation type="journal article" date="2006" name="Proc. Natl. Acad. Sci. U.S.A.">
        <title>Comparative genomics of the lactic acid bacteria.</title>
        <authorList>
            <person name="Makarova K.S."/>
            <person name="Slesarev A."/>
            <person name="Wolf Y.I."/>
            <person name="Sorokin A."/>
            <person name="Mirkin B."/>
            <person name="Koonin E.V."/>
            <person name="Pavlov A."/>
            <person name="Pavlova N."/>
            <person name="Karamychev V."/>
            <person name="Polouchine N."/>
            <person name="Shakhova V."/>
            <person name="Grigoriev I."/>
            <person name="Lou Y."/>
            <person name="Rohksar D."/>
            <person name="Lucas S."/>
            <person name="Huang K."/>
            <person name="Goodstein D.M."/>
            <person name="Hawkins T."/>
            <person name="Plengvidhya V."/>
            <person name="Welker D."/>
            <person name="Hughes J."/>
            <person name="Goh Y."/>
            <person name="Benson A."/>
            <person name="Baldwin K."/>
            <person name="Lee J.-H."/>
            <person name="Diaz-Muniz I."/>
            <person name="Dosti B."/>
            <person name="Smeianov V."/>
            <person name="Wechter W."/>
            <person name="Barabote R."/>
            <person name="Lorca G."/>
            <person name="Altermann E."/>
            <person name="Barrangou R."/>
            <person name="Ganesan B."/>
            <person name="Xie Y."/>
            <person name="Rawsthorne H."/>
            <person name="Tamir D."/>
            <person name="Parker C."/>
            <person name="Breidt F."/>
            <person name="Broadbent J.R."/>
            <person name="Hutkins R."/>
            <person name="O'Sullivan D."/>
            <person name="Steele J."/>
            <person name="Unlu G."/>
            <person name="Saier M.H. Jr."/>
            <person name="Klaenhammer T."/>
            <person name="Richardson P."/>
            <person name="Kozyavkin S."/>
            <person name="Weimer B.C."/>
            <person name="Mills D.A."/>
        </authorList>
    </citation>
    <scope>NUCLEOTIDE SEQUENCE [LARGE SCALE GENOMIC DNA]</scope>
    <source>
        <strain>ATCC BAA-491 / LMD-9</strain>
    </source>
</reference>
<proteinExistence type="inferred from homology"/>
<comment type="function">
    <text evidence="1">Involved in unsaturated fatty acids biosynthesis. Catalyzes the dehydration of short chain beta-hydroxyacyl-ACPs and long chain saturated and unsaturated beta-hydroxyacyl-ACPs.</text>
</comment>
<comment type="catalytic activity">
    <reaction evidence="1">
        <text>a (3R)-hydroxyacyl-[ACP] = a (2E)-enoyl-[ACP] + H2O</text>
        <dbReference type="Rhea" id="RHEA:13097"/>
        <dbReference type="Rhea" id="RHEA-COMP:9925"/>
        <dbReference type="Rhea" id="RHEA-COMP:9945"/>
        <dbReference type="ChEBI" id="CHEBI:15377"/>
        <dbReference type="ChEBI" id="CHEBI:78784"/>
        <dbReference type="ChEBI" id="CHEBI:78827"/>
        <dbReference type="EC" id="4.2.1.59"/>
    </reaction>
</comment>
<comment type="subcellular location">
    <subcellularLocation>
        <location evidence="1">Cytoplasm</location>
    </subcellularLocation>
</comment>
<comment type="similarity">
    <text evidence="1">Belongs to the thioester dehydratase family. FabZ subfamily.</text>
</comment>
<accession>Q03M48</accession>
<dbReference type="EC" id="4.2.1.59" evidence="1"/>
<dbReference type="EMBL" id="CP000419">
    <property type="protein sequence ID" value="ABJ65724.1"/>
    <property type="molecule type" value="Genomic_DNA"/>
</dbReference>
<dbReference type="RefSeq" id="WP_002885470.1">
    <property type="nucleotide sequence ID" value="NC_008532.1"/>
</dbReference>
<dbReference type="SMR" id="Q03M48"/>
<dbReference type="GeneID" id="93791569"/>
<dbReference type="KEGG" id="ste:STER_0436"/>
<dbReference type="HOGENOM" id="CLU_078912_3_0_9"/>
<dbReference type="GO" id="GO:0005737">
    <property type="term" value="C:cytoplasm"/>
    <property type="evidence" value="ECO:0007669"/>
    <property type="project" value="UniProtKB-SubCell"/>
</dbReference>
<dbReference type="GO" id="GO:0016020">
    <property type="term" value="C:membrane"/>
    <property type="evidence" value="ECO:0007669"/>
    <property type="project" value="GOC"/>
</dbReference>
<dbReference type="GO" id="GO:0019171">
    <property type="term" value="F:(3R)-hydroxyacyl-[acyl-carrier-protein] dehydratase activity"/>
    <property type="evidence" value="ECO:0007669"/>
    <property type="project" value="UniProtKB-EC"/>
</dbReference>
<dbReference type="GO" id="GO:0006633">
    <property type="term" value="P:fatty acid biosynthetic process"/>
    <property type="evidence" value="ECO:0007669"/>
    <property type="project" value="UniProtKB-UniRule"/>
</dbReference>
<dbReference type="GO" id="GO:0009245">
    <property type="term" value="P:lipid A biosynthetic process"/>
    <property type="evidence" value="ECO:0007669"/>
    <property type="project" value="UniProtKB-UniRule"/>
</dbReference>
<dbReference type="CDD" id="cd01288">
    <property type="entry name" value="FabZ"/>
    <property type="match status" value="1"/>
</dbReference>
<dbReference type="FunFam" id="3.10.129.10:FF:000001">
    <property type="entry name" value="3-hydroxyacyl-[acyl-carrier-protein] dehydratase FabZ"/>
    <property type="match status" value="1"/>
</dbReference>
<dbReference type="Gene3D" id="3.10.129.10">
    <property type="entry name" value="Hotdog Thioesterase"/>
    <property type="match status" value="1"/>
</dbReference>
<dbReference type="HAMAP" id="MF_00406">
    <property type="entry name" value="FabZ"/>
    <property type="match status" value="1"/>
</dbReference>
<dbReference type="InterPro" id="IPR013114">
    <property type="entry name" value="FabA_FabZ"/>
</dbReference>
<dbReference type="InterPro" id="IPR010084">
    <property type="entry name" value="FabZ"/>
</dbReference>
<dbReference type="InterPro" id="IPR029069">
    <property type="entry name" value="HotDog_dom_sf"/>
</dbReference>
<dbReference type="NCBIfam" id="TIGR01750">
    <property type="entry name" value="fabZ"/>
    <property type="match status" value="1"/>
</dbReference>
<dbReference type="NCBIfam" id="NF000582">
    <property type="entry name" value="PRK00006.1"/>
    <property type="match status" value="1"/>
</dbReference>
<dbReference type="PANTHER" id="PTHR30272">
    <property type="entry name" value="3-HYDROXYACYL-[ACYL-CARRIER-PROTEIN] DEHYDRATASE"/>
    <property type="match status" value="1"/>
</dbReference>
<dbReference type="PANTHER" id="PTHR30272:SF1">
    <property type="entry name" value="3-HYDROXYACYL-[ACYL-CARRIER-PROTEIN] DEHYDRATASE"/>
    <property type="match status" value="1"/>
</dbReference>
<dbReference type="Pfam" id="PF07977">
    <property type="entry name" value="FabA"/>
    <property type="match status" value="1"/>
</dbReference>
<dbReference type="SUPFAM" id="SSF54637">
    <property type="entry name" value="Thioesterase/thiol ester dehydrase-isomerase"/>
    <property type="match status" value="1"/>
</dbReference>
<protein>
    <recommendedName>
        <fullName evidence="1">3-hydroxyacyl-[acyl-carrier-protein] dehydratase FabZ</fullName>
        <ecNumber evidence="1">4.2.1.59</ecNumber>
    </recommendedName>
    <alternativeName>
        <fullName evidence="1">(3R)-hydroxymyristoyl-[acyl-carrier-protein] dehydratase</fullName>
        <shortName evidence="1">(3R)-hydroxymyristoyl-ACP dehydrase</shortName>
    </alternativeName>
    <alternativeName>
        <fullName evidence="1">Beta-hydroxyacyl-ACP dehydratase</fullName>
    </alternativeName>
</protein>
<keyword id="KW-0963">Cytoplasm</keyword>
<keyword id="KW-0441">Lipid A biosynthesis</keyword>
<keyword id="KW-0444">Lipid biosynthesis</keyword>
<keyword id="KW-0443">Lipid metabolism</keyword>
<keyword id="KW-0456">Lyase</keyword>
<organism>
    <name type="scientific">Streptococcus thermophilus (strain ATCC BAA-491 / LMD-9)</name>
    <dbReference type="NCBI Taxonomy" id="322159"/>
    <lineage>
        <taxon>Bacteria</taxon>
        <taxon>Bacillati</taxon>
        <taxon>Bacillota</taxon>
        <taxon>Bacilli</taxon>
        <taxon>Lactobacillales</taxon>
        <taxon>Streptococcaceae</taxon>
        <taxon>Streptococcus</taxon>
    </lineage>
</organism>
<name>FABZ_STRTD</name>
<gene>
    <name evidence="1" type="primary">fabZ</name>
    <name type="ordered locus">STER_0436</name>
</gene>
<evidence type="ECO:0000255" key="1">
    <source>
        <dbReference type="HAMAP-Rule" id="MF_00406"/>
    </source>
</evidence>
<sequence length="141" mass="15445">MTIDINAIREALPHRYPMLLVDRVLEVSEDEITAIKNVTINEPFFNGHFPQYPVMPGVLIMEALAQTAGVLELSKPENKGKLVFYAGMDKVKFKKQVVPGDQLVMTAKFVKRRGTIAVVEAKAEVDGKLAASGTLTFAIGS</sequence>